<proteinExistence type="predicted"/>
<name>Y1222_METJA</name>
<feature type="chain" id="PRO_0000107223" description="Uncharacterized protein MJ1222">
    <location>
        <begin position="1"/>
        <end position="243"/>
    </location>
</feature>
<keyword id="KW-1185">Reference proteome</keyword>
<sequence>MEIMKKQNSQINEINKDEIFVVVPAFNEEKMIGETLKNLKKEGYKNIVVVDDGSMDKTSEIAKKEGVIVCRHILNRGLGGALGTGIKCALLYKPKIIITFDADGQHHPKDVEKVVKPVLFEGYDMAIGSRMMDKNELKNMPLVKRIGNFGLNFITYLMGGYFVTDSQSGLRAFSYEAAKKIIGDLKSDRYEVSSEFIILAKKHGLKLKEVPIKTIYTEYSMSRGTNVITGFKILFKLIMQKIF</sequence>
<protein>
    <recommendedName>
        <fullName>Uncharacterized protein MJ1222</fullName>
    </recommendedName>
</protein>
<gene>
    <name type="ordered locus">MJ1222</name>
</gene>
<organism>
    <name type="scientific">Methanocaldococcus jannaschii (strain ATCC 43067 / DSM 2661 / JAL-1 / JCM 10045 / NBRC 100440)</name>
    <name type="common">Methanococcus jannaschii</name>
    <dbReference type="NCBI Taxonomy" id="243232"/>
    <lineage>
        <taxon>Archaea</taxon>
        <taxon>Methanobacteriati</taxon>
        <taxon>Methanobacteriota</taxon>
        <taxon>Methanomada group</taxon>
        <taxon>Methanococci</taxon>
        <taxon>Methanococcales</taxon>
        <taxon>Methanocaldococcaceae</taxon>
        <taxon>Methanocaldococcus</taxon>
    </lineage>
</organism>
<dbReference type="EMBL" id="L77117">
    <property type="protein sequence ID" value="AAB99226.1"/>
    <property type="molecule type" value="Genomic_DNA"/>
</dbReference>
<dbReference type="PIR" id="E64452">
    <property type="entry name" value="E64452"/>
</dbReference>
<dbReference type="SMR" id="Q58619"/>
<dbReference type="FunCoup" id="Q58619">
    <property type="interactions" value="188"/>
</dbReference>
<dbReference type="STRING" id="243232.MJ_1222"/>
<dbReference type="CAZy" id="GT2">
    <property type="family name" value="Glycosyltransferase Family 2"/>
</dbReference>
<dbReference type="PaxDb" id="243232-MJ_1222"/>
<dbReference type="EnsemblBacteria" id="AAB99226">
    <property type="protein sequence ID" value="AAB99226"/>
    <property type="gene ID" value="MJ_1222"/>
</dbReference>
<dbReference type="KEGG" id="mja:MJ_1222"/>
<dbReference type="eggNOG" id="arCOG00895">
    <property type="taxonomic scope" value="Archaea"/>
</dbReference>
<dbReference type="HOGENOM" id="CLU_033536_7_4_2"/>
<dbReference type="InParanoid" id="Q58619"/>
<dbReference type="PhylomeDB" id="Q58619"/>
<dbReference type="Proteomes" id="UP000000805">
    <property type="component" value="Chromosome"/>
</dbReference>
<dbReference type="GO" id="GO:0006487">
    <property type="term" value="P:protein N-linked glycosylation"/>
    <property type="evidence" value="ECO:0000318"/>
    <property type="project" value="GO_Central"/>
</dbReference>
<dbReference type="CDD" id="cd04179">
    <property type="entry name" value="DPM_DPG-synthase_like"/>
    <property type="match status" value="1"/>
</dbReference>
<dbReference type="FunFam" id="3.90.550.10:FF:000129">
    <property type="entry name" value="Glycosyltransferase family 2 protein"/>
    <property type="match status" value="1"/>
</dbReference>
<dbReference type="Gene3D" id="3.90.550.10">
    <property type="entry name" value="Spore Coat Polysaccharide Biosynthesis Protein SpsA, Chain A"/>
    <property type="match status" value="1"/>
</dbReference>
<dbReference type="InterPro" id="IPR001173">
    <property type="entry name" value="Glyco_trans_2-like"/>
</dbReference>
<dbReference type="InterPro" id="IPR029044">
    <property type="entry name" value="Nucleotide-diphossugar_trans"/>
</dbReference>
<dbReference type="PANTHER" id="PTHR10859:SF91">
    <property type="entry name" value="DOLICHYL-PHOSPHATE BETA-GLUCOSYLTRANSFERASE"/>
    <property type="match status" value="1"/>
</dbReference>
<dbReference type="PANTHER" id="PTHR10859">
    <property type="entry name" value="GLYCOSYL TRANSFERASE"/>
    <property type="match status" value="1"/>
</dbReference>
<dbReference type="Pfam" id="PF00535">
    <property type="entry name" value="Glycos_transf_2"/>
    <property type="match status" value="1"/>
</dbReference>
<dbReference type="SUPFAM" id="SSF53448">
    <property type="entry name" value="Nucleotide-diphospho-sugar transferases"/>
    <property type="match status" value="1"/>
</dbReference>
<reference key="1">
    <citation type="journal article" date="1996" name="Science">
        <title>Complete genome sequence of the methanogenic archaeon, Methanococcus jannaschii.</title>
        <authorList>
            <person name="Bult C.J."/>
            <person name="White O."/>
            <person name="Olsen G.J."/>
            <person name="Zhou L."/>
            <person name="Fleischmann R.D."/>
            <person name="Sutton G.G."/>
            <person name="Blake J.A."/>
            <person name="FitzGerald L.M."/>
            <person name="Clayton R.A."/>
            <person name="Gocayne J.D."/>
            <person name="Kerlavage A.R."/>
            <person name="Dougherty B.A."/>
            <person name="Tomb J.-F."/>
            <person name="Adams M.D."/>
            <person name="Reich C.I."/>
            <person name="Overbeek R."/>
            <person name="Kirkness E.F."/>
            <person name="Weinstock K.G."/>
            <person name="Merrick J.M."/>
            <person name="Glodek A."/>
            <person name="Scott J.L."/>
            <person name="Geoghagen N.S.M."/>
            <person name="Weidman J.F."/>
            <person name="Fuhrmann J.L."/>
            <person name="Nguyen D."/>
            <person name="Utterback T.R."/>
            <person name="Kelley J.M."/>
            <person name="Peterson J.D."/>
            <person name="Sadow P.W."/>
            <person name="Hanna M.C."/>
            <person name="Cotton M.D."/>
            <person name="Roberts K.M."/>
            <person name="Hurst M.A."/>
            <person name="Kaine B.P."/>
            <person name="Borodovsky M."/>
            <person name="Klenk H.-P."/>
            <person name="Fraser C.M."/>
            <person name="Smith H.O."/>
            <person name="Woese C.R."/>
            <person name="Venter J.C."/>
        </authorList>
    </citation>
    <scope>NUCLEOTIDE SEQUENCE [LARGE SCALE GENOMIC DNA]</scope>
    <source>
        <strain>ATCC 43067 / DSM 2661 / JAL-1 / JCM 10045 / NBRC 100440</strain>
    </source>
</reference>
<accession>Q58619</accession>